<comment type="function">
    <text evidence="4 5">Involved in local disassembly of cortical microtubules when associated with ICR5 and KIN13A.</text>
</comment>
<comment type="subunit">
    <text evidence="4 5">Component of the active ARAC10-IRC5-KIN13A complex (PubMed:24280391). Interacts with ICR5 (PubMed:22984069).</text>
</comment>
<comment type="interaction">
    <interactant intactId="EBI-1548072">
        <id>O82481</id>
    </interactant>
    <interactant intactId="EBI-4425188">
        <id>Q93ZY2</id>
        <label>ROPGEF1</label>
    </interactant>
    <organismsDiffer>false</organismsDiffer>
    <experiments>5</experiments>
</comment>
<comment type="interaction">
    <interactant intactId="EBI-1548072">
        <id>O82481</id>
    </interactant>
    <interactant intactId="EBI-7819454">
        <id>Q0WNP7</id>
        <label>ROPGEF4</label>
    </interactant>
    <organismsDiffer>false</organismsDiffer>
    <experiments>5</experiments>
</comment>
<comment type="subcellular location">
    <subcellularLocation>
        <location>Membrane</location>
        <topology>Lipid-anchor</topology>
    </subcellularLocation>
    <subcellularLocation>
        <location>Cytoplasm</location>
    </subcellularLocation>
    <subcellularLocation>
        <location>Cytoplasm</location>
        <location>Cytoskeleton</location>
    </subcellularLocation>
    <text evidence="4">Recruited along cortical microtubules upon interaction with ICR5.</text>
</comment>
<comment type="similarity">
    <text evidence="6">Belongs to the small GTPase superfamily. Rho family.</text>
</comment>
<accession>O82481</accession>
<gene>
    <name type="primary">ARAC10</name>
    <name type="synonym">ROP11</name>
    <name type="ordered locus">At5g62880</name>
    <name type="ORF">MQB2.180</name>
    <name type="ORF">MQB2.20</name>
</gene>
<dbReference type="EMBL" id="AF079485">
    <property type="protein sequence ID" value="AAC63014.1"/>
    <property type="molecule type" value="mRNA"/>
</dbReference>
<dbReference type="EMBL" id="AF115467">
    <property type="protein sequence ID" value="AAF40238.1"/>
    <property type="molecule type" value="Genomic_DNA"/>
</dbReference>
<dbReference type="EMBL" id="AB009053">
    <property type="protein sequence ID" value="BAB10857.1"/>
    <property type="molecule type" value="Genomic_DNA"/>
</dbReference>
<dbReference type="EMBL" id="CP002688">
    <property type="protein sequence ID" value="AED97667.1"/>
    <property type="molecule type" value="Genomic_DNA"/>
</dbReference>
<dbReference type="EMBL" id="BT002997">
    <property type="protein sequence ID" value="AAO22805.1"/>
    <property type="molecule type" value="mRNA"/>
</dbReference>
<dbReference type="EMBL" id="BT004459">
    <property type="protein sequence ID" value="AAO42453.1"/>
    <property type="molecule type" value="mRNA"/>
</dbReference>
<dbReference type="PIR" id="T51824">
    <property type="entry name" value="T51824"/>
</dbReference>
<dbReference type="SMR" id="O82481"/>
<dbReference type="BioGRID" id="21651">
    <property type="interactions" value="18"/>
</dbReference>
<dbReference type="DIP" id="DIP-39043N"/>
<dbReference type="FunCoup" id="O82481">
    <property type="interactions" value="3603"/>
</dbReference>
<dbReference type="IntAct" id="O82481">
    <property type="interactions" value="18"/>
</dbReference>
<dbReference type="MINT" id="O82481"/>
<dbReference type="STRING" id="3702.O82481"/>
<dbReference type="PaxDb" id="3702-AT5G62880.1"/>
<dbReference type="ProteomicsDB" id="236293"/>
<dbReference type="EnsemblPlants" id="AT5G62880.1">
    <property type="protein sequence ID" value="AT5G62880.1"/>
    <property type="gene ID" value="AT5G62880"/>
</dbReference>
<dbReference type="GeneID" id="836408"/>
<dbReference type="Gramene" id="AT5G62880.1">
    <property type="protein sequence ID" value="AT5G62880.1"/>
    <property type="gene ID" value="AT5G62880"/>
</dbReference>
<dbReference type="KEGG" id="ath:AT5G62880"/>
<dbReference type="Araport" id="AT5G62880"/>
<dbReference type="TAIR" id="AT5G62880">
    <property type="gene designation" value="RAC10"/>
</dbReference>
<dbReference type="eggNOG" id="KOG0393">
    <property type="taxonomic scope" value="Eukaryota"/>
</dbReference>
<dbReference type="HOGENOM" id="CLU_041217_21_3_1"/>
<dbReference type="InParanoid" id="O82481"/>
<dbReference type="OMA" id="MRSVKCV"/>
<dbReference type="OrthoDB" id="8830751at2759"/>
<dbReference type="PhylomeDB" id="O82481"/>
<dbReference type="PRO" id="PR:O82481"/>
<dbReference type="Proteomes" id="UP000006548">
    <property type="component" value="Chromosome 5"/>
</dbReference>
<dbReference type="ExpressionAtlas" id="O82481">
    <property type="expression patterns" value="baseline and differential"/>
</dbReference>
<dbReference type="GO" id="GO:0005737">
    <property type="term" value="C:cytoplasm"/>
    <property type="evidence" value="ECO:0007669"/>
    <property type="project" value="UniProtKB-SubCell"/>
</dbReference>
<dbReference type="GO" id="GO:0005856">
    <property type="term" value="C:cytoskeleton"/>
    <property type="evidence" value="ECO:0007669"/>
    <property type="project" value="UniProtKB-SubCell"/>
</dbReference>
<dbReference type="GO" id="GO:0005634">
    <property type="term" value="C:nucleus"/>
    <property type="evidence" value="ECO:0000314"/>
    <property type="project" value="TAIR"/>
</dbReference>
<dbReference type="GO" id="GO:0005886">
    <property type="term" value="C:plasma membrane"/>
    <property type="evidence" value="ECO:0000314"/>
    <property type="project" value="UniProtKB"/>
</dbReference>
<dbReference type="GO" id="GO:0009531">
    <property type="term" value="C:secondary cell wall"/>
    <property type="evidence" value="ECO:0000314"/>
    <property type="project" value="TAIR"/>
</dbReference>
<dbReference type="GO" id="GO:0005525">
    <property type="term" value="F:GTP binding"/>
    <property type="evidence" value="ECO:0007669"/>
    <property type="project" value="UniProtKB-KW"/>
</dbReference>
<dbReference type="GO" id="GO:0003924">
    <property type="term" value="F:GTPase activity"/>
    <property type="evidence" value="ECO:0007669"/>
    <property type="project" value="InterPro"/>
</dbReference>
<dbReference type="GO" id="GO:0019901">
    <property type="term" value="F:protein kinase binding"/>
    <property type="evidence" value="ECO:0000353"/>
    <property type="project" value="UniProtKB"/>
</dbReference>
<dbReference type="GO" id="GO:0019903">
    <property type="term" value="F:protein phosphatase binding"/>
    <property type="evidence" value="ECO:0000353"/>
    <property type="project" value="TAIR"/>
</dbReference>
<dbReference type="GO" id="GO:0009788">
    <property type="term" value="P:negative regulation of abscisic acid-activated signaling pathway"/>
    <property type="evidence" value="ECO:0000314"/>
    <property type="project" value="TAIR"/>
</dbReference>
<dbReference type="GO" id="GO:0009664">
    <property type="term" value="P:plant-type cell wall organization"/>
    <property type="evidence" value="ECO:0000315"/>
    <property type="project" value="TAIR"/>
</dbReference>
<dbReference type="GO" id="GO:2001009">
    <property type="term" value="P:regulation of plant-type cell wall cellulose biosynthetic process"/>
    <property type="evidence" value="ECO:0000316"/>
    <property type="project" value="TAIR"/>
</dbReference>
<dbReference type="GO" id="GO:0007264">
    <property type="term" value="P:small GTPase-mediated signal transduction"/>
    <property type="evidence" value="ECO:0007669"/>
    <property type="project" value="InterPro"/>
</dbReference>
<dbReference type="CDD" id="cd04133">
    <property type="entry name" value="Rop_like"/>
    <property type="match status" value="1"/>
</dbReference>
<dbReference type="FunFam" id="3.40.50.300:FF:000512">
    <property type="entry name" value="Rac-like GTP-binding protein 3"/>
    <property type="match status" value="1"/>
</dbReference>
<dbReference type="Gene3D" id="3.40.50.300">
    <property type="entry name" value="P-loop containing nucleotide triphosphate hydrolases"/>
    <property type="match status" value="1"/>
</dbReference>
<dbReference type="InterPro" id="IPR027417">
    <property type="entry name" value="P-loop_NTPase"/>
</dbReference>
<dbReference type="InterPro" id="IPR005225">
    <property type="entry name" value="Small_GTP-bd"/>
</dbReference>
<dbReference type="InterPro" id="IPR001806">
    <property type="entry name" value="Small_GTPase"/>
</dbReference>
<dbReference type="InterPro" id="IPR003578">
    <property type="entry name" value="Small_GTPase_Rho"/>
</dbReference>
<dbReference type="NCBIfam" id="TIGR00231">
    <property type="entry name" value="small_GTP"/>
    <property type="match status" value="1"/>
</dbReference>
<dbReference type="PANTHER" id="PTHR24072">
    <property type="entry name" value="RHO FAMILY GTPASE"/>
    <property type="match status" value="1"/>
</dbReference>
<dbReference type="Pfam" id="PF00071">
    <property type="entry name" value="Ras"/>
    <property type="match status" value="1"/>
</dbReference>
<dbReference type="PRINTS" id="PR00449">
    <property type="entry name" value="RASTRNSFRMNG"/>
</dbReference>
<dbReference type="SMART" id="SM00175">
    <property type="entry name" value="RAB"/>
    <property type="match status" value="1"/>
</dbReference>
<dbReference type="SMART" id="SM00173">
    <property type="entry name" value="RAS"/>
    <property type="match status" value="1"/>
</dbReference>
<dbReference type="SMART" id="SM00174">
    <property type="entry name" value="RHO"/>
    <property type="match status" value="1"/>
</dbReference>
<dbReference type="SUPFAM" id="SSF52540">
    <property type="entry name" value="P-loop containing nucleoside triphosphate hydrolases"/>
    <property type="match status" value="1"/>
</dbReference>
<dbReference type="PROSITE" id="PS51420">
    <property type="entry name" value="RHO"/>
    <property type="match status" value="1"/>
</dbReference>
<sequence length="215" mass="23879">MASSASKFIKCVTVGDGAVGKTCMLICYTSNKFPTDYIPTVFDNFSANVVVEGTTVNLGLWDTAGQEDYNRLRPLSYRGADVFVLSFSLVSRASYENVFKKWIPELQHFAPGVPLVLVGTKLDLREDKHYLADHPGLSPVTTAQGEELRKLIGATYYIECSSKTQQNVKAVFDSAIKEVIKPLVKQKEKTKKKKKQKSNHGCLSNVLCGRIVTRH</sequence>
<keyword id="KW-0963">Cytoplasm</keyword>
<keyword id="KW-0206">Cytoskeleton</keyword>
<keyword id="KW-0342">GTP-binding</keyword>
<keyword id="KW-0449">Lipoprotein</keyword>
<keyword id="KW-0472">Membrane</keyword>
<keyword id="KW-0547">Nucleotide-binding</keyword>
<keyword id="KW-0564">Palmitate</keyword>
<keyword id="KW-1185">Reference proteome</keyword>
<proteinExistence type="evidence at protein level"/>
<reference key="1">
    <citation type="journal article" date="2000" name="Genetics">
        <title>Genetic structure and evolution of RAC-GTPases in Arabidopsis thaliana.</title>
        <authorList>
            <person name="Winge P."/>
            <person name="Brembu T."/>
            <person name="Kristensen R."/>
            <person name="Bones A.M."/>
        </authorList>
    </citation>
    <scope>NUCLEOTIDE SEQUENCE [MRNA]</scope>
    <source>
        <strain>cv. Columbia</strain>
        <strain>cv. Landsberg erecta</strain>
    </source>
</reference>
<reference key="2">
    <citation type="journal article" date="1998" name="DNA Res.">
        <title>Structural analysis of Arabidopsis thaliana chromosome 5. IV. Sequence features of the regions of 1,456,315 bp covered by nineteen physically assigned P1 and TAC clones.</title>
        <authorList>
            <person name="Sato S."/>
            <person name="Kaneko T."/>
            <person name="Kotani H."/>
            <person name="Nakamura Y."/>
            <person name="Asamizu E."/>
            <person name="Miyajima N."/>
            <person name="Tabata S."/>
        </authorList>
    </citation>
    <scope>NUCLEOTIDE SEQUENCE [LARGE SCALE GENOMIC DNA]</scope>
    <source>
        <strain>cv. Columbia</strain>
    </source>
</reference>
<reference key="3">
    <citation type="journal article" date="2017" name="Plant J.">
        <title>Araport11: a complete reannotation of the Arabidopsis thaliana reference genome.</title>
        <authorList>
            <person name="Cheng C.Y."/>
            <person name="Krishnakumar V."/>
            <person name="Chan A.P."/>
            <person name="Thibaud-Nissen F."/>
            <person name="Schobel S."/>
            <person name="Town C.D."/>
        </authorList>
    </citation>
    <scope>GENOME REANNOTATION</scope>
    <source>
        <strain>cv. Columbia</strain>
    </source>
</reference>
<reference key="4">
    <citation type="journal article" date="2003" name="Science">
        <title>Empirical analysis of transcriptional activity in the Arabidopsis genome.</title>
        <authorList>
            <person name="Yamada K."/>
            <person name="Lim J."/>
            <person name="Dale J.M."/>
            <person name="Chen H."/>
            <person name="Shinn P."/>
            <person name="Palm C.J."/>
            <person name="Southwick A.M."/>
            <person name="Wu H.C."/>
            <person name="Kim C.J."/>
            <person name="Nguyen M."/>
            <person name="Pham P.K."/>
            <person name="Cheuk R.F."/>
            <person name="Karlin-Newmann G."/>
            <person name="Liu S.X."/>
            <person name="Lam B."/>
            <person name="Sakano H."/>
            <person name="Wu T."/>
            <person name="Yu G."/>
            <person name="Miranda M."/>
            <person name="Quach H.L."/>
            <person name="Tripp M."/>
            <person name="Chang C.H."/>
            <person name="Lee J.M."/>
            <person name="Toriumi M.J."/>
            <person name="Chan M.M."/>
            <person name="Tang C.C."/>
            <person name="Onodera C.S."/>
            <person name="Deng J.M."/>
            <person name="Akiyama K."/>
            <person name="Ansari Y."/>
            <person name="Arakawa T."/>
            <person name="Banh J."/>
            <person name="Banno F."/>
            <person name="Bowser L."/>
            <person name="Brooks S.Y."/>
            <person name="Carninci P."/>
            <person name="Chao Q."/>
            <person name="Choy N."/>
            <person name="Enju A."/>
            <person name="Goldsmith A.D."/>
            <person name="Gurjal M."/>
            <person name="Hansen N.F."/>
            <person name="Hayashizaki Y."/>
            <person name="Johnson-Hopson C."/>
            <person name="Hsuan V.W."/>
            <person name="Iida K."/>
            <person name="Karnes M."/>
            <person name="Khan S."/>
            <person name="Koesema E."/>
            <person name="Ishida J."/>
            <person name="Jiang P.X."/>
            <person name="Jones T."/>
            <person name="Kawai J."/>
            <person name="Kamiya A."/>
            <person name="Meyers C."/>
            <person name="Nakajima M."/>
            <person name="Narusaka M."/>
            <person name="Seki M."/>
            <person name="Sakurai T."/>
            <person name="Satou M."/>
            <person name="Tamse R."/>
            <person name="Vaysberg M."/>
            <person name="Wallender E.K."/>
            <person name="Wong C."/>
            <person name="Yamamura Y."/>
            <person name="Yuan S."/>
            <person name="Shinozaki K."/>
            <person name="Davis R.W."/>
            <person name="Theologis A."/>
            <person name="Ecker J.R."/>
        </authorList>
    </citation>
    <scope>NUCLEOTIDE SEQUENCE [LARGE SCALE MRNA]</scope>
    <source>
        <strain>cv. Columbia</strain>
    </source>
</reference>
<reference key="5">
    <citation type="journal article" date="2002" name="Plant Cell">
        <title>A cell-specific, prenylation-independent mechanism regulates targeting of type II RACs.</title>
        <authorList>
            <person name="Lavy M."/>
            <person name="Bracha-Drori K."/>
            <person name="Sternberg H."/>
            <person name="Yalovsky S."/>
        </authorList>
    </citation>
    <scope>PALMITOYLATION AT CYS-202 AND CYS-208</scope>
    <scope>SUBCELLULAR LOCATION</scope>
    <scope>MUTAGENESIS OF CYS-202 AND CYS-208</scope>
</reference>
<reference key="6">
    <citation type="journal article" date="2012" name="Science">
        <title>Initiation of cell wall pattern by a Rho- and microtubule-driven symmetry breaking.</title>
        <authorList>
            <person name="Oda Y."/>
            <person name="Fukuda H."/>
        </authorList>
    </citation>
    <scope>FUNCTION</scope>
    <scope>INTERACTION WITH ICR5</scope>
    <scope>SUBCELLULAR LOCATION</scope>
</reference>
<reference key="7">
    <citation type="journal article" date="2013" name="Plant Cell">
        <title>Rho of plant GTPase signaling regulates the behavior of Arabidopsis kinesin-13A to establish secondary cell wall patterns.</title>
        <authorList>
            <person name="Oda Y."/>
            <person name="Fukuda H."/>
        </authorList>
    </citation>
    <scope>FUNCTION</scope>
    <scope>SUBUNIT</scope>
</reference>
<feature type="chain" id="PRO_0000198924" description="Rac-like GTP-binding protein ARAC10">
    <location>
        <begin position="1"/>
        <end position="215"/>
    </location>
</feature>
<feature type="short sequence motif" description="Effector region" evidence="2">
    <location>
        <begin position="37"/>
        <end position="45"/>
    </location>
</feature>
<feature type="binding site" evidence="1">
    <location>
        <begin position="15"/>
        <end position="22"/>
    </location>
    <ligand>
        <name>GTP</name>
        <dbReference type="ChEBI" id="CHEBI:37565"/>
    </ligand>
</feature>
<feature type="binding site" evidence="1">
    <location>
        <begin position="62"/>
        <end position="66"/>
    </location>
    <ligand>
        <name>GTP</name>
        <dbReference type="ChEBI" id="CHEBI:37565"/>
    </ligand>
</feature>
<feature type="binding site" evidence="1">
    <location>
        <begin position="120"/>
        <end position="123"/>
    </location>
    <ligand>
        <name>GTP</name>
        <dbReference type="ChEBI" id="CHEBI:37565"/>
    </ligand>
</feature>
<feature type="lipid moiety-binding region" description="S-palmitoyl cysteine" evidence="7">
    <location>
        <position position="202"/>
    </location>
</feature>
<feature type="lipid moiety-binding region" description="S-palmitoyl cysteine" evidence="7">
    <location>
        <position position="208"/>
    </location>
</feature>
<feature type="mutagenesis site" description="Affects the membrane location." evidence="3">
    <original>C</original>
    <variation>S</variation>
    <location>
        <position position="202"/>
    </location>
</feature>
<feature type="mutagenesis site" description="Affects the membrane location." evidence="3">
    <original>C</original>
    <variation>S</variation>
    <location>
        <position position="208"/>
    </location>
</feature>
<organism>
    <name type="scientific">Arabidopsis thaliana</name>
    <name type="common">Mouse-ear cress</name>
    <dbReference type="NCBI Taxonomy" id="3702"/>
    <lineage>
        <taxon>Eukaryota</taxon>
        <taxon>Viridiplantae</taxon>
        <taxon>Streptophyta</taxon>
        <taxon>Embryophyta</taxon>
        <taxon>Tracheophyta</taxon>
        <taxon>Spermatophyta</taxon>
        <taxon>Magnoliopsida</taxon>
        <taxon>eudicotyledons</taxon>
        <taxon>Gunneridae</taxon>
        <taxon>Pentapetalae</taxon>
        <taxon>rosids</taxon>
        <taxon>malvids</taxon>
        <taxon>Brassicales</taxon>
        <taxon>Brassicaceae</taxon>
        <taxon>Camelineae</taxon>
        <taxon>Arabidopsis</taxon>
    </lineage>
</organism>
<protein>
    <recommendedName>
        <fullName>Rac-like GTP-binding protein ARAC10</fullName>
    </recommendedName>
    <alternativeName>
        <fullName>GTPase protein ROP11</fullName>
    </alternativeName>
</protein>
<name>RAC10_ARATH</name>
<evidence type="ECO:0000250" key="1"/>
<evidence type="ECO:0000255" key="2"/>
<evidence type="ECO:0000269" key="3">
    <source>
    </source>
</evidence>
<evidence type="ECO:0000269" key="4">
    <source>
    </source>
</evidence>
<evidence type="ECO:0000269" key="5">
    <source>
    </source>
</evidence>
<evidence type="ECO:0000305" key="6"/>
<evidence type="ECO:0000305" key="7">
    <source>
    </source>
</evidence>